<feature type="chain" id="PRO_1000089368" description="Dihydroxy-acid dehydratase">
    <location>
        <begin position="1"/>
        <end position="600"/>
    </location>
</feature>
<feature type="active site" description="Proton acceptor" evidence="1">
    <location>
        <position position="515"/>
    </location>
</feature>
<feature type="binding site" evidence="1">
    <location>
        <position position="82"/>
    </location>
    <ligand>
        <name>Mg(2+)</name>
        <dbReference type="ChEBI" id="CHEBI:18420"/>
    </ligand>
</feature>
<feature type="binding site" evidence="1">
    <location>
        <position position="123"/>
    </location>
    <ligand>
        <name>[2Fe-2S] cluster</name>
        <dbReference type="ChEBI" id="CHEBI:190135"/>
    </ligand>
</feature>
<feature type="binding site" evidence="1">
    <location>
        <position position="124"/>
    </location>
    <ligand>
        <name>Mg(2+)</name>
        <dbReference type="ChEBI" id="CHEBI:18420"/>
    </ligand>
</feature>
<feature type="binding site" description="via carbamate group" evidence="1">
    <location>
        <position position="125"/>
    </location>
    <ligand>
        <name>Mg(2+)</name>
        <dbReference type="ChEBI" id="CHEBI:18420"/>
    </ligand>
</feature>
<feature type="binding site" evidence="1">
    <location>
        <position position="192"/>
    </location>
    <ligand>
        <name>[2Fe-2S] cluster</name>
        <dbReference type="ChEBI" id="CHEBI:190135"/>
    </ligand>
</feature>
<feature type="binding site" evidence="1">
    <location>
        <position position="489"/>
    </location>
    <ligand>
        <name>Mg(2+)</name>
        <dbReference type="ChEBI" id="CHEBI:18420"/>
    </ligand>
</feature>
<feature type="modified residue" description="N6-carboxylysine" evidence="1">
    <location>
        <position position="125"/>
    </location>
</feature>
<dbReference type="EC" id="4.2.1.9" evidence="1"/>
<dbReference type="EMBL" id="CP000139">
    <property type="protein sequence ID" value="ABR40211.1"/>
    <property type="molecule type" value="Genomic_DNA"/>
</dbReference>
<dbReference type="RefSeq" id="WP_005847233.1">
    <property type="nucleotide sequence ID" value="NZ_JANSWM010000107.1"/>
</dbReference>
<dbReference type="SMR" id="A6L3E7"/>
<dbReference type="STRING" id="435590.BVU_2554"/>
<dbReference type="PaxDb" id="435590-BVU_2554"/>
<dbReference type="GeneID" id="5303518"/>
<dbReference type="KEGG" id="bvu:BVU_2554"/>
<dbReference type="eggNOG" id="COG0129">
    <property type="taxonomic scope" value="Bacteria"/>
</dbReference>
<dbReference type="HOGENOM" id="CLU_014271_4_3_10"/>
<dbReference type="BioCyc" id="BVUL435590:G1G59-2658-MONOMER"/>
<dbReference type="UniPathway" id="UPA00047">
    <property type="reaction ID" value="UER00057"/>
</dbReference>
<dbReference type="UniPathway" id="UPA00049">
    <property type="reaction ID" value="UER00061"/>
</dbReference>
<dbReference type="Proteomes" id="UP000002861">
    <property type="component" value="Chromosome"/>
</dbReference>
<dbReference type="GO" id="GO:0005829">
    <property type="term" value="C:cytosol"/>
    <property type="evidence" value="ECO:0007669"/>
    <property type="project" value="TreeGrafter"/>
</dbReference>
<dbReference type="GO" id="GO:0051537">
    <property type="term" value="F:2 iron, 2 sulfur cluster binding"/>
    <property type="evidence" value="ECO:0007669"/>
    <property type="project" value="UniProtKB-UniRule"/>
</dbReference>
<dbReference type="GO" id="GO:0004160">
    <property type="term" value="F:dihydroxy-acid dehydratase activity"/>
    <property type="evidence" value="ECO:0007669"/>
    <property type="project" value="UniProtKB-UniRule"/>
</dbReference>
<dbReference type="GO" id="GO:0000287">
    <property type="term" value="F:magnesium ion binding"/>
    <property type="evidence" value="ECO:0007669"/>
    <property type="project" value="UniProtKB-UniRule"/>
</dbReference>
<dbReference type="GO" id="GO:0009097">
    <property type="term" value="P:isoleucine biosynthetic process"/>
    <property type="evidence" value="ECO:0007669"/>
    <property type="project" value="UniProtKB-UniRule"/>
</dbReference>
<dbReference type="GO" id="GO:0009099">
    <property type="term" value="P:L-valine biosynthetic process"/>
    <property type="evidence" value="ECO:0007669"/>
    <property type="project" value="UniProtKB-UniRule"/>
</dbReference>
<dbReference type="FunFam" id="3.50.30.80:FF:000001">
    <property type="entry name" value="Dihydroxy-acid dehydratase"/>
    <property type="match status" value="1"/>
</dbReference>
<dbReference type="Gene3D" id="3.50.30.80">
    <property type="entry name" value="IlvD/EDD C-terminal domain-like"/>
    <property type="match status" value="1"/>
</dbReference>
<dbReference type="HAMAP" id="MF_00012">
    <property type="entry name" value="IlvD"/>
    <property type="match status" value="1"/>
</dbReference>
<dbReference type="InterPro" id="IPR042096">
    <property type="entry name" value="Dihydro-acid_dehy_C"/>
</dbReference>
<dbReference type="InterPro" id="IPR004404">
    <property type="entry name" value="DihydroxyA_deHydtase"/>
</dbReference>
<dbReference type="InterPro" id="IPR020558">
    <property type="entry name" value="DiOHA_6PGluconate_deHydtase_CS"/>
</dbReference>
<dbReference type="InterPro" id="IPR056740">
    <property type="entry name" value="ILV_EDD_C"/>
</dbReference>
<dbReference type="InterPro" id="IPR000581">
    <property type="entry name" value="ILV_EDD_N"/>
</dbReference>
<dbReference type="InterPro" id="IPR037237">
    <property type="entry name" value="IlvD/EDD_N"/>
</dbReference>
<dbReference type="NCBIfam" id="TIGR00110">
    <property type="entry name" value="ilvD"/>
    <property type="match status" value="1"/>
</dbReference>
<dbReference type="NCBIfam" id="NF009103">
    <property type="entry name" value="PRK12448.1"/>
    <property type="match status" value="1"/>
</dbReference>
<dbReference type="PANTHER" id="PTHR43661">
    <property type="entry name" value="D-XYLONATE DEHYDRATASE"/>
    <property type="match status" value="1"/>
</dbReference>
<dbReference type="PANTHER" id="PTHR43661:SF3">
    <property type="entry name" value="D-XYLONATE DEHYDRATASE YAGF-RELATED"/>
    <property type="match status" value="1"/>
</dbReference>
<dbReference type="Pfam" id="PF24877">
    <property type="entry name" value="ILV_EDD_C"/>
    <property type="match status" value="1"/>
</dbReference>
<dbReference type="Pfam" id="PF00920">
    <property type="entry name" value="ILVD_EDD_N"/>
    <property type="match status" value="1"/>
</dbReference>
<dbReference type="SUPFAM" id="SSF143975">
    <property type="entry name" value="IlvD/EDD N-terminal domain-like"/>
    <property type="match status" value="1"/>
</dbReference>
<dbReference type="SUPFAM" id="SSF52016">
    <property type="entry name" value="LeuD/IlvD-like"/>
    <property type="match status" value="1"/>
</dbReference>
<dbReference type="PROSITE" id="PS00886">
    <property type="entry name" value="ILVD_EDD_1"/>
    <property type="match status" value="1"/>
</dbReference>
<dbReference type="PROSITE" id="PS00887">
    <property type="entry name" value="ILVD_EDD_2"/>
    <property type="match status" value="1"/>
</dbReference>
<comment type="function">
    <text evidence="1">Functions in the biosynthesis of branched-chain amino acids. Catalyzes the dehydration of (2R,3R)-2,3-dihydroxy-3-methylpentanoate (2,3-dihydroxy-3-methylvalerate) into 2-oxo-3-methylpentanoate (2-oxo-3-methylvalerate) and of (2R)-2,3-dihydroxy-3-methylbutanoate (2,3-dihydroxyisovalerate) into 2-oxo-3-methylbutanoate (2-oxoisovalerate), the penultimate precursor to L-isoleucine and L-valine, respectively.</text>
</comment>
<comment type="catalytic activity">
    <reaction evidence="1">
        <text>(2R)-2,3-dihydroxy-3-methylbutanoate = 3-methyl-2-oxobutanoate + H2O</text>
        <dbReference type="Rhea" id="RHEA:24809"/>
        <dbReference type="ChEBI" id="CHEBI:11851"/>
        <dbReference type="ChEBI" id="CHEBI:15377"/>
        <dbReference type="ChEBI" id="CHEBI:49072"/>
        <dbReference type="EC" id="4.2.1.9"/>
    </reaction>
    <physiologicalReaction direction="left-to-right" evidence="1">
        <dbReference type="Rhea" id="RHEA:24810"/>
    </physiologicalReaction>
</comment>
<comment type="catalytic activity">
    <reaction evidence="1">
        <text>(2R,3R)-2,3-dihydroxy-3-methylpentanoate = (S)-3-methyl-2-oxopentanoate + H2O</text>
        <dbReference type="Rhea" id="RHEA:27694"/>
        <dbReference type="ChEBI" id="CHEBI:15377"/>
        <dbReference type="ChEBI" id="CHEBI:35146"/>
        <dbReference type="ChEBI" id="CHEBI:49258"/>
        <dbReference type="EC" id="4.2.1.9"/>
    </reaction>
    <physiologicalReaction direction="left-to-right" evidence="1">
        <dbReference type="Rhea" id="RHEA:27695"/>
    </physiologicalReaction>
</comment>
<comment type="cofactor">
    <cofactor evidence="1">
        <name>[2Fe-2S] cluster</name>
        <dbReference type="ChEBI" id="CHEBI:190135"/>
    </cofactor>
    <text evidence="1">Binds 1 [2Fe-2S] cluster per subunit. This cluster acts as a Lewis acid cofactor.</text>
</comment>
<comment type="cofactor">
    <cofactor evidence="1">
        <name>Mg(2+)</name>
        <dbReference type="ChEBI" id="CHEBI:18420"/>
    </cofactor>
</comment>
<comment type="pathway">
    <text evidence="1">Amino-acid biosynthesis; L-isoleucine biosynthesis; L-isoleucine from 2-oxobutanoate: step 3/4.</text>
</comment>
<comment type="pathway">
    <text evidence="1">Amino-acid biosynthesis; L-valine biosynthesis; L-valine from pyruvate: step 3/4.</text>
</comment>
<comment type="subunit">
    <text evidence="1">Homodimer.</text>
</comment>
<comment type="similarity">
    <text evidence="1">Belongs to the IlvD/Edd family.</text>
</comment>
<reference key="1">
    <citation type="journal article" date="2007" name="PLoS Biol.">
        <title>Evolution of symbiotic bacteria in the distal human intestine.</title>
        <authorList>
            <person name="Xu J."/>
            <person name="Mahowald M.A."/>
            <person name="Ley R.E."/>
            <person name="Lozupone C.A."/>
            <person name="Hamady M."/>
            <person name="Martens E.C."/>
            <person name="Henrissat B."/>
            <person name="Coutinho P.M."/>
            <person name="Minx P."/>
            <person name="Latreille P."/>
            <person name="Cordum H."/>
            <person name="Van Brunt A."/>
            <person name="Kim K."/>
            <person name="Fulton R.S."/>
            <person name="Fulton L.A."/>
            <person name="Clifton S.W."/>
            <person name="Wilson R.K."/>
            <person name="Knight R.D."/>
            <person name="Gordon J.I."/>
        </authorList>
    </citation>
    <scope>NUCLEOTIDE SEQUENCE [LARGE SCALE GENOMIC DNA]</scope>
    <source>
        <strain>ATCC 8482 / DSM 1447 / JCM 5826 / CCUG 4940 / NBRC 14291 / NCTC 11154</strain>
    </source>
</reference>
<gene>
    <name evidence="1" type="primary">ilvD</name>
    <name type="ordered locus">BVU_2554</name>
</gene>
<accession>A6L3E7</accession>
<name>ILVD_PHOV8</name>
<keyword id="KW-0001">2Fe-2S</keyword>
<keyword id="KW-0028">Amino-acid biosynthesis</keyword>
<keyword id="KW-0100">Branched-chain amino acid biosynthesis</keyword>
<keyword id="KW-0408">Iron</keyword>
<keyword id="KW-0411">Iron-sulfur</keyword>
<keyword id="KW-0456">Lyase</keyword>
<keyword id="KW-0460">Magnesium</keyword>
<keyword id="KW-0479">Metal-binding</keyword>
<protein>
    <recommendedName>
        <fullName evidence="1">Dihydroxy-acid dehydratase</fullName>
        <shortName evidence="1">DAD</shortName>
        <ecNumber evidence="1">4.2.1.9</ecNumber>
    </recommendedName>
</protein>
<organism>
    <name type="scientific">Phocaeicola vulgatus (strain ATCC 8482 / DSM 1447 / JCM 5826 / CCUG 4940 / NBRC 14291 / NCTC 11154)</name>
    <name type="common">Bacteroides vulgatus</name>
    <dbReference type="NCBI Taxonomy" id="435590"/>
    <lineage>
        <taxon>Bacteria</taxon>
        <taxon>Pseudomonadati</taxon>
        <taxon>Bacteroidota</taxon>
        <taxon>Bacteroidia</taxon>
        <taxon>Bacteroidales</taxon>
        <taxon>Bacteroidaceae</taxon>
        <taxon>Phocaeicola</taxon>
    </lineage>
</organism>
<sequence length="600" mass="64113">MKNQLRSSFSTQGRRMAGARALWVANGMKKEMMGKPIIAIVNSFTQFVPGHTHLHEIGQQVKAEIEKLGCFAAEFNTIAIDDGIAMGHDGMLYSLPSRDIIADSVEYMVNAHKADAMVCISNCDKITPGMLMAAMRLNIPTVFVSGGPMEAGEWNNQHLDLIDAMIKSADASVSDEDVAQIEDNACPGCGCCSGMFTANSMNCLNEAIGLGLPGNGTILATHANRTQLFKDAAALIVKNAYKYYEEGDDSVLPRSIATRDAFLNAMTLDIAMGGSTNTVLHLLAIAHEAEVDFKMDDIDMLSRHVPCLCKVAPNTQKYHIQDVNRAGGILNILGELSKGGLLKTDVKRVDGLTLAEAVEKYNICKKEVDTEAKRIYSSAPGNKFNIKLGSQNAVYKELDTDRANGCIRDLQHAYSKDGGLAVLKGNIAQDGCVVKTAGVDESIWKFSGPAKVFDSQDAACEGILGGKVVSGDVVVITHEGPKGGPGMQEMLYPTSYIKSKHLGKECALITDGRFSGGTSGLSIGHISPEAAAGGNIGKIVDGDIIEIDIPNRSINVKLSDEELAARPMAPVTRDRKVPKSLKAYASMVSSADKGGVRIID</sequence>
<evidence type="ECO:0000255" key="1">
    <source>
        <dbReference type="HAMAP-Rule" id="MF_00012"/>
    </source>
</evidence>
<proteinExistence type="inferred from homology"/>